<dbReference type="EMBL" id="AAFI02000035">
    <property type="protein sequence ID" value="EAL67283.1"/>
    <property type="molecule type" value="Genomic_DNA"/>
</dbReference>
<dbReference type="RefSeq" id="XP_641250.1">
    <property type="nucleotide sequence ID" value="XM_636158.1"/>
</dbReference>
<dbReference type="SMR" id="Q54VV5"/>
<dbReference type="FunCoup" id="Q54VV5">
    <property type="interactions" value="68"/>
</dbReference>
<dbReference type="STRING" id="44689.Q54VV5"/>
<dbReference type="GlyGen" id="Q54VV5">
    <property type="glycosylation" value="1 site"/>
</dbReference>
<dbReference type="PaxDb" id="44689-DDB0234269"/>
<dbReference type="EnsemblProtists" id="EAL67283">
    <property type="protein sequence ID" value="EAL67283"/>
    <property type="gene ID" value="DDB_G0280113"/>
</dbReference>
<dbReference type="GeneID" id="8622382"/>
<dbReference type="KEGG" id="ddi:DDB_G0280113"/>
<dbReference type="dictyBase" id="DDB_G0280113">
    <property type="gene designation" value="anapc5"/>
</dbReference>
<dbReference type="VEuPathDB" id="AmoebaDB:DDB_G0280113"/>
<dbReference type="eggNOG" id="KOG4322">
    <property type="taxonomic scope" value="Eukaryota"/>
</dbReference>
<dbReference type="HOGENOM" id="CLU_296727_0_0_1"/>
<dbReference type="InParanoid" id="Q54VV5"/>
<dbReference type="OMA" id="HRYFDYC"/>
<dbReference type="Reactome" id="R-DDI-141430">
    <property type="pathway name" value="Inactivation of APC/C via direct inhibition of the APC/C complex"/>
</dbReference>
<dbReference type="Reactome" id="R-DDI-174048">
    <property type="pathway name" value="APC/C:Cdc20 mediated degradation of Cyclin B"/>
</dbReference>
<dbReference type="Reactome" id="R-DDI-174084">
    <property type="pathway name" value="Autodegradation of Cdh1 by Cdh1:APC/C"/>
</dbReference>
<dbReference type="Reactome" id="R-DDI-174154">
    <property type="pathway name" value="APC/C:Cdc20 mediated degradation of Securin"/>
</dbReference>
<dbReference type="Reactome" id="R-DDI-174178">
    <property type="pathway name" value="APC/C:Cdh1 mediated degradation of Cdc20 and other APC/C:Cdh1 targeted proteins in late mitosis/early G1"/>
</dbReference>
<dbReference type="Reactome" id="R-DDI-174184">
    <property type="pathway name" value="Cdc20:Phospho-APC/C mediated degradation of Cyclin A"/>
</dbReference>
<dbReference type="Reactome" id="R-DDI-176407">
    <property type="pathway name" value="Conversion from APC/C:Cdc20 to APC/C:Cdh1 in late anaphase"/>
</dbReference>
<dbReference type="Reactome" id="R-DDI-176408">
    <property type="pathway name" value="Regulation of APC/C activators between G1/S and early anaphase"/>
</dbReference>
<dbReference type="Reactome" id="R-DDI-176409">
    <property type="pathway name" value="APC/C:Cdc20 mediated degradation of mitotic proteins"/>
</dbReference>
<dbReference type="Reactome" id="R-DDI-176412">
    <property type="pathway name" value="Phosphorylation of the APC/C"/>
</dbReference>
<dbReference type="Reactome" id="R-DDI-179409">
    <property type="pathway name" value="APC-Cdc20 mediated degradation of Nek2A"/>
</dbReference>
<dbReference type="Reactome" id="R-DDI-2467813">
    <property type="pathway name" value="Separation of Sister Chromatids"/>
</dbReference>
<dbReference type="Reactome" id="R-DDI-2559582">
    <property type="pathway name" value="Senescence-Associated Secretory Phenotype (SASP)"/>
</dbReference>
<dbReference type="Reactome" id="R-DDI-69017">
    <property type="pathway name" value="CDK-mediated phosphorylation and removal of Cdc6"/>
</dbReference>
<dbReference type="Reactome" id="R-DDI-983168">
    <property type="pathway name" value="Antigen processing: Ubiquitination &amp; Proteasome degradation"/>
</dbReference>
<dbReference type="UniPathway" id="UPA00143"/>
<dbReference type="PRO" id="PR:Q54VV5"/>
<dbReference type="Proteomes" id="UP000002195">
    <property type="component" value="Chromosome 3"/>
</dbReference>
<dbReference type="GO" id="GO:0005680">
    <property type="term" value="C:anaphase-promoting complex"/>
    <property type="evidence" value="ECO:0000250"/>
    <property type="project" value="dictyBase"/>
</dbReference>
<dbReference type="GO" id="GO:0031145">
    <property type="term" value="P:anaphase-promoting complex-dependent catabolic process"/>
    <property type="evidence" value="ECO:0000318"/>
    <property type="project" value="GO_Central"/>
</dbReference>
<dbReference type="GO" id="GO:0051301">
    <property type="term" value="P:cell division"/>
    <property type="evidence" value="ECO:0007669"/>
    <property type="project" value="UniProtKB-KW"/>
</dbReference>
<dbReference type="GO" id="GO:0045842">
    <property type="term" value="P:positive regulation of mitotic metaphase/anaphase transition"/>
    <property type="evidence" value="ECO:0000318"/>
    <property type="project" value="GO_Central"/>
</dbReference>
<dbReference type="GO" id="GO:0070979">
    <property type="term" value="P:protein K11-linked ubiquitination"/>
    <property type="evidence" value="ECO:0000318"/>
    <property type="project" value="GO_Central"/>
</dbReference>
<dbReference type="GO" id="GO:0016567">
    <property type="term" value="P:protein ubiquitination"/>
    <property type="evidence" value="ECO:0000305"/>
    <property type="project" value="dictyBase"/>
</dbReference>
<dbReference type="CDD" id="cd16270">
    <property type="entry name" value="Apc5_N"/>
    <property type="match status" value="1"/>
</dbReference>
<dbReference type="InterPro" id="IPR037679">
    <property type="entry name" value="Apc5"/>
</dbReference>
<dbReference type="InterPro" id="IPR026000">
    <property type="entry name" value="Apc5_dom"/>
</dbReference>
<dbReference type="PANTHER" id="PTHR12830">
    <property type="entry name" value="ANAPHASE-PROMOTING COMPLEX SUBUNIT 5"/>
    <property type="match status" value="1"/>
</dbReference>
<dbReference type="PANTHER" id="PTHR12830:SF9">
    <property type="entry name" value="ANAPHASE-PROMOTING COMPLEX SUBUNIT 5"/>
    <property type="match status" value="1"/>
</dbReference>
<dbReference type="Pfam" id="PF12862">
    <property type="entry name" value="ANAPC5"/>
    <property type="match status" value="1"/>
</dbReference>
<proteinExistence type="inferred from homology"/>
<name>APC5_DICDI</name>
<protein>
    <recommendedName>
        <fullName>Anaphase-promoting complex subunit 5</fullName>
        <shortName>APC5</shortName>
    </recommendedName>
</protein>
<comment type="function">
    <text evidence="1">Component of the anaphase promoting complex/cyclosome (APC/C), a cell cycle-regulated E3 ubiquitin-protein ligase complex that controls progression through mitosis and the G1 phase of the cell cycle.</text>
</comment>
<comment type="pathway">
    <text>Protein modification; protein ubiquitination.</text>
</comment>
<comment type="subunit">
    <text evidence="1">The APC/C is composed of at least 13 subunits that stay tightly associated throughout the cell cycle: anapc1, anapc2, anapc3, anapc4, anapc5, anapc6, anapc7, anapc8, anapc10, anapc11, cdc20, cdc26 and cdh1.</text>
</comment>
<comment type="subcellular location">
    <subcellularLocation>
        <location evidence="1">Nucleus</location>
    </subcellularLocation>
</comment>
<comment type="similarity">
    <text evidence="3">Belongs to the APC5 family.</text>
</comment>
<evidence type="ECO:0000250" key="1"/>
<evidence type="ECO:0000256" key="2">
    <source>
        <dbReference type="SAM" id="MobiDB-lite"/>
    </source>
</evidence>
<evidence type="ECO:0000305" key="3"/>
<accession>Q54VV5</accession>
<gene>
    <name type="primary">anapc5</name>
    <name type="synonym">apc5</name>
    <name type="ORF">DDB_G0280113</name>
</gene>
<organism>
    <name type="scientific">Dictyostelium discoideum</name>
    <name type="common">Social amoeba</name>
    <dbReference type="NCBI Taxonomy" id="44689"/>
    <lineage>
        <taxon>Eukaryota</taxon>
        <taxon>Amoebozoa</taxon>
        <taxon>Evosea</taxon>
        <taxon>Eumycetozoa</taxon>
        <taxon>Dictyostelia</taxon>
        <taxon>Dictyosteliales</taxon>
        <taxon>Dictyosteliaceae</taxon>
        <taxon>Dictyostelium</taxon>
    </lineage>
</organism>
<keyword id="KW-0131">Cell cycle</keyword>
<keyword id="KW-0132">Cell division</keyword>
<keyword id="KW-0498">Mitosis</keyword>
<keyword id="KW-0539">Nucleus</keyword>
<keyword id="KW-1185">Reference proteome</keyword>
<keyword id="KW-0677">Repeat</keyword>
<keyword id="KW-0802">TPR repeat</keyword>
<keyword id="KW-0833">Ubl conjugation pathway</keyword>
<reference key="1">
    <citation type="journal article" date="2005" name="Nature">
        <title>The genome of the social amoeba Dictyostelium discoideum.</title>
        <authorList>
            <person name="Eichinger L."/>
            <person name="Pachebat J.A."/>
            <person name="Gloeckner G."/>
            <person name="Rajandream M.A."/>
            <person name="Sucgang R."/>
            <person name="Berriman M."/>
            <person name="Song J."/>
            <person name="Olsen R."/>
            <person name="Szafranski K."/>
            <person name="Xu Q."/>
            <person name="Tunggal B."/>
            <person name="Kummerfeld S."/>
            <person name="Madera M."/>
            <person name="Konfortov B.A."/>
            <person name="Rivero F."/>
            <person name="Bankier A.T."/>
            <person name="Lehmann R."/>
            <person name="Hamlin N."/>
            <person name="Davies R."/>
            <person name="Gaudet P."/>
            <person name="Fey P."/>
            <person name="Pilcher K."/>
            <person name="Chen G."/>
            <person name="Saunders D."/>
            <person name="Sodergren E.J."/>
            <person name="Davis P."/>
            <person name="Kerhornou A."/>
            <person name="Nie X."/>
            <person name="Hall N."/>
            <person name="Anjard C."/>
            <person name="Hemphill L."/>
            <person name="Bason N."/>
            <person name="Farbrother P."/>
            <person name="Desany B."/>
            <person name="Just E."/>
            <person name="Morio T."/>
            <person name="Rost R."/>
            <person name="Churcher C.M."/>
            <person name="Cooper J."/>
            <person name="Haydock S."/>
            <person name="van Driessche N."/>
            <person name="Cronin A."/>
            <person name="Goodhead I."/>
            <person name="Muzny D.M."/>
            <person name="Mourier T."/>
            <person name="Pain A."/>
            <person name="Lu M."/>
            <person name="Harper D."/>
            <person name="Lindsay R."/>
            <person name="Hauser H."/>
            <person name="James K.D."/>
            <person name="Quiles M."/>
            <person name="Madan Babu M."/>
            <person name="Saito T."/>
            <person name="Buchrieser C."/>
            <person name="Wardroper A."/>
            <person name="Felder M."/>
            <person name="Thangavelu M."/>
            <person name="Johnson D."/>
            <person name="Knights A."/>
            <person name="Loulseged H."/>
            <person name="Mungall K.L."/>
            <person name="Oliver K."/>
            <person name="Price C."/>
            <person name="Quail M.A."/>
            <person name="Urushihara H."/>
            <person name="Hernandez J."/>
            <person name="Rabbinowitsch E."/>
            <person name="Steffen D."/>
            <person name="Sanders M."/>
            <person name="Ma J."/>
            <person name="Kohara Y."/>
            <person name="Sharp S."/>
            <person name="Simmonds M.N."/>
            <person name="Spiegler S."/>
            <person name="Tivey A."/>
            <person name="Sugano S."/>
            <person name="White B."/>
            <person name="Walker D."/>
            <person name="Woodward J.R."/>
            <person name="Winckler T."/>
            <person name="Tanaka Y."/>
            <person name="Shaulsky G."/>
            <person name="Schleicher M."/>
            <person name="Weinstock G.M."/>
            <person name="Rosenthal A."/>
            <person name="Cox E.C."/>
            <person name="Chisholm R.L."/>
            <person name="Gibbs R.A."/>
            <person name="Loomis W.F."/>
            <person name="Platzer M."/>
            <person name="Kay R.R."/>
            <person name="Williams J.G."/>
            <person name="Dear P.H."/>
            <person name="Noegel A.A."/>
            <person name="Barrell B.G."/>
            <person name="Kuspa A."/>
        </authorList>
    </citation>
    <scope>NUCLEOTIDE SEQUENCE [LARGE SCALE GENOMIC DNA]</scope>
    <source>
        <strain>AX4</strain>
    </source>
</reference>
<feature type="chain" id="PRO_0000328278" description="Anaphase-promoting complex subunit 5">
    <location>
        <begin position="1"/>
        <end position="1017"/>
    </location>
</feature>
<feature type="repeat" description="TPR 1">
    <location>
        <begin position="30"/>
        <end position="63"/>
    </location>
</feature>
<feature type="repeat" description="TPR 2">
    <location>
        <begin position="182"/>
        <end position="214"/>
    </location>
</feature>
<feature type="repeat" description="TPR 3">
    <location>
        <begin position="252"/>
        <end position="286"/>
    </location>
</feature>
<feature type="repeat" description="TPR 4">
    <location>
        <begin position="337"/>
        <end position="370"/>
    </location>
</feature>
<feature type="repeat" description="TPR 5">
    <location>
        <begin position="508"/>
        <end position="541"/>
    </location>
</feature>
<feature type="repeat" description="TPR 6">
    <location>
        <begin position="642"/>
        <end position="675"/>
    </location>
</feature>
<feature type="repeat" description="TPR 7">
    <location>
        <begin position="756"/>
        <end position="790"/>
    </location>
</feature>
<feature type="repeat" description="TPR 8">
    <location>
        <begin position="838"/>
        <end position="871"/>
    </location>
</feature>
<feature type="repeat" description="TPR 9">
    <location>
        <begin position="876"/>
        <end position="908"/>
    </location>
</feature>
<feature type="repeat" description="TPR 10">
    <location>
        <begin position="931"/>
        <end position="964"/>
    </location>
</feature>
<feature type="region of interest" description="Disordered" evidence="2">
    <location>
        <begin position="451"/>
        <end position="527"/>
    </location>
</feature>
<feature type="region of interest" description="Disordered" evidence="2">
    <location>
        <begin position="617"/>
        <end position="636"/>
    </location>
</feature>
<feature type="compositionally biased region" description="Low complexity" evidence="2">
    <location>
        <begin position="451"/>
        <end position="525"/>
    </location>
</feature>
<sequence length="1017" mass="117792">MDKYRLTPHKITICVLVEYYLNGTIKYHQKQSLSHLLIRHIKENNYQDTVKEVSLYDFIEKELKYVLPIQFINNEFLRMIQFDSVDDIYQFMSSLKELFNGSNDHESINSKQMQLLDSKSILGIFIKKVILNFNQILFDGLIKLYDQLDQYLNDFYNEINKIQQQQQQQQQKEHCENDNSIDMSMDQEQQQQQQEDYNEISNYENKIKFLSPLDEERFIYEETIRINSLIGIETPLEIENQVNRLKASLPNVKRVHLISLLFNIGYQDYDQSLEDLHRYFDYVNGQMTSSQWSSSASSFLFTPNDNYQSGNSNSSNYYYNNYNFIGGSGDTTNLMLPYAVLNLVRLHYHFGHYEESYLALREAIRIAQERADHSCLALADHWLARLLKKSVYNSMESSNLLQYLLASHSDSEILKKSIERSRDLEMPDLLALNHTAFSKYKLENGEFSTNINSNNYNSNNNNNNNNSNTNNNTNNNNNTNNANNNNNNNNNNTNNTNNNNNNNNNNNNNNNNNNNNNNSSNSNNNGGVNMFGKSFHLWNDIFQPIEISRLLDKSSSTAMIAHHLYSSSWELLGNNDLAQFFTELAMKSYHSNDLSLQHDPLRAVSSQNTIIYNIGTNNNNNNNNNNNQIKQQQQQNQQPPDLLSFCKLALLYSKKSKYNEAIQILIKCFSIYKTQHLCGNLLTFTVLSILFDHLMINIDNNNNNNNNNNNNNNNNNNNNNNDNELLISIVIESLINITNRFQSEDSVDGSGWSQIVICYQKIIKYYCNVRGMYEKSMNLIVKGIQISRDFGLDSQITHFYSLLSKIYEKSSPYRFSGLSDTLSALSLSNSYHLANSIADSNIALIKIHLSTDRLDKAITLIKETLPMVLSDKLLNSQLYLLWAKSLISTSTKQSIDYLNRSEQLFLQLFSNQSNNNNNNNNNNNNNNELLKEIYYLKSIIYNDLGDIENRNLYAKKFKSILVPSSSIQQQQQQQQQQQQQQQQQQQQQQQSNQSPVINSVQPTPKICLVPPILMKIR</sequence>